<protein>
    <recommendedName>
        <fullName evidence="1">3-methyl-2-oxobutanoate hydroxymethyltransferase</fullName>
        <ecNumber evidence="1">2.1.2.11</ecNumber>
    </recommendedName>
    <alternativeName>
        <fullName evidence="1">Ketopantoate hydroxymethyltransferase</fullName>
        <shortName evidence="1">KPHMT</shortName>
    </alternativeName>
</protein>
<dbReference type="EC" id="2.1.2.11" evidence="1"/>
<dbReference type="EMBL" id="CP001011">
    <property type="protein sequence ID" value="ACB91630.1"/>
    <property type="molecule type" value="Genomic_DNA"/>
</dbReference>
<dbReference type="RefSeq" id="WP_004572960.1">
    <property type="nucleotide sequence ID" value="NC_010577.1"/>
</dbReference>
<dbReference type="SMR" id="B2I720"/>
<dbReference type="GeneID" id="93903878"/>
<dbReference type="KEGG" id="xfn:XfasM23_0173"/>
<dbReference type="HOGENOM" id="CLU_036645_1_0_6"/>
<dbReference type="UniPathway" id="UPA00028">
    <property type="reaction ID" value="UER00003"/>
</dbReference>
<dbReference type="Proteomes" id="UP000001698">
    <property type="component" value="Chromosome"/>
</dbReference>
<dbReference type="GO" id="GO:0005737">
    <property type="term" value="C:cytoplasm"/>
    <property type="evidence" value="ECO:0007669"/>
    <property type="project" value="UniProtKB-SubCell"/>
</dbReference>
<dbReference type="GO" id="GO:0003864">
    <property type="term" value="F:3-methyl-2-oxobutanoate hydroxymethyltransferase activity"/>
    <property type="evidence" value="ECO:0007669"/>
    <property type="project" value="UniProtKB-UniRule"/>
</dbReference>
<dbReference type="GO" id="GO:0000287">
    <property type="term" value="F:magnesium ion binding"/>
    <property type="evidence" value="ECO:0007669"/>
    <property type="project" value="TreeGrafter"/>
</dbReference>
<dbReference type="GO" id="GO:0015940">
    <property type="term" value="P:pantothenate biosynthetic process"/>
    <property type="evidence" value="ECO:0007669"/>
    <property type="project" value="UniProtKB-UniRule"/>
</dbReference>
<dbReference type="CDD" id="cd06557">
    <property type="entry name" value="KPHMT-like"/>
    <property type="match status" value="1"/>
</dbReference>
<dbReference type="FunFam" id="3.20.20.60:FF:000003">
    <property type="entry name" value="3-methyl-2-oxobutanoate hydroxymethyltransferase"/>
    <property type="match status" value="1"/>
</dbReference>
<dbReference type="Gene3D" id="3.20.20.60">
    <property type="entry name" value="Phosphoenolpyruvate-binding domains"/>
    <property type="match status" value="1"/>
</dbReference>
<dbReference type="HAMAP" id="MF_00156">
    <property type="entry name" value="PanB"/>
    <property type="match status" value="1"/>
</dbReference>
<dbReference type="InterPro" id="IPR003700">
    <property type="entry name" value="Pantoate_hydroxy_MeTrfase"/>
</dbReference>
<dbReference type="InterPro" id="IPR015813">
    <property type="entry name" value="Pyrv/PenolPyrv_kinase-like_dom"/>
</dbReference>
<dbReference type="InterPro" id="IPR040442">
    <property type="entry name" value="Pyrv_kinase-like_dom_sf"/>
</dbReference>
<dbReference type="NCBIfam" id="TIGR00222">
    <property type="entry name" value="panB"/>
    <property type="match status" value="1"/>
</dbReference>
<dbReference type="NCBIfam" id="NF001452">
    <property type="entry name" value="PRK00311.1"/>
    <property type="match status" value="1"/>
</dbReference>
<dbReference type="PANTHER" id="PTHR20881">
    <property type="entry name" value="3-METHYL-2-OXOBUTANOATE HYDROXYMETHYLTRANSFERASE"/>
    <property type="match status" value="1"/>
</dbReference>
<dbReference type="PANTHER" id="PTHR20881:SF0">
    <property type="entry name" value="3-METHYL-2-OXOBUTANOATE HYDROXYMETHYLTRANSFERASE"/>
    <property type="match status" value="1"/>
</dbReference>
<dbReference type="Pfam" id="PF02548">
    <property type="entry name" value="Pantoate_transf"/>
    <property type="match status" value="1"/>
</dbReference>
<dbReference type="PIRSF" id="PIRSF000388">
    <property type="entry name" value="Pantoate_hydroxy_MeTrfase"/>
    <property type="match status" value="1"/>
</dbReference>
<dbReference type="SUPFAM" id="SSF51621">
    <property type="entry name" value="Phosphoenolpyruvate/pyruvate domain"/>
    <property type="match status" value="1"/>
</dbReference>
<sequence>MSIYTNSKPWTVPALAEAKRNGSKIVMLTAYDAGFARILDANGVDLILVGDSLGMVVQGHDSTLPVSVHDMVYHTACVARGVRHAMLVVDLPFQADASPERALEAATALLRVGAQMIKIEGAGHKLEVISYLVEREIPVCSHLGLTPQSVLRFGGYKVQGRGEEAGGRLRAEARAAVEAGATLLLLECVPSQLAAQITTDASVPTIGIGAGAGCDGQVLVLHDLLGLDSGHPRPKFVKDFLAHGGSVAGAVRAYANAVRDGSFPDVEHTYTS</sequence>
<name>PANB_XYLF2</name>
<proteinExistence type="inferred from homology"/>
<accession>B2I720</accession>
<comment type="function">
    <text evidence="1">Catalyzes the reversible reaction in which hydroxymethyl group from 5,10-methylenetetrahydrofolate is transferred onto alpha-ketoisovalerate to form ketopantoate.</text>
</comment>
<comment type="catalytic activity">
    <reaction evidence="1">
        <text>3-methyl-2-oxobutanoate + (6R)-5,10-methylene-5,6,7,8-tetrahydrofolate + H2O = 2-dehydropantoate + (6S)-5,6,7,8-tetrahydrofolate</text>
        <dbReference type="Rhea" id="RHEA:11824"/>
        <dbReference type="ChEBI" id="CHEBI:11561"/>
        <dbReference type="ChEBI" id="CHEBI:11851"/>
        <dbReference type="ChEBI" id="CHEBI:15377"/>
        <dbReference type="ChEBI" id="CHEBI:15636"/>
        <dbReference type="ChEBI" id="CHEBI:57453"/>
        <dbReference type="EC" id="2.1.2.11"/>
    </reaction>
</comment>
<comment type="cofactor">
    <cofactor evidence="1">
        <name>Mg(2+)</name>
        <dbReference type="ChEBI" id="CHEBI:18420"/>
    </cofactor>
    <text evidence="1">Binds 1 Mg(2+) ion per subunit.</text>
</comment>
<comment type="pathway">
    <text evidence="1">Cofactor biosynthesis; (R)-pantothenate biosynthesis; (R)-pantoate from 3-methyl-2-oxobutanoate: step 1/2.</text>
</comment>
<comment type="subunit">
    <text evidence="1">Homodecamer; pentamer of dimers.</text>
</comment>
<comment type="subcellular location">
    <subcellularLocation>
        <location evidence="1">Cytoplasm</location>
    </subcellularLocation>
</comment>
<comment type="similarity">
    <text evidence="1">Belongs to the PanB family.</text>
</comment>
<reference key="1">
    <citation type="journal article" date="2010" name="J. Bacteriol.">
        <title>Whole genome sequences of two Xylella fastidiosa strains (M12 and M23) causing almond leaf scorch disease in California.</title>
        <authorList>
            <person name="Chen J."/>
            <person name="Xie G."/>
            <person name="Han S."/>
            <person name="Chertkov O."/>
            <person name="Sims D."/>
            <person name="Civerolo E.L."/>
        </authorList>
    </citation>
    <scope>NUCLEOTIDE SEQUENCE [LARGE SCALE GENOMIC DNA]</scope>
    <source>
        <strain>M23</strain>
    </source>
</reference>
<feature type="chain" id="PRO_1000097021" description="3-methyl-2-oxobutanoate hydroxymethyltransferase">
    <location>
        <begin position="1"/>
        <end position="272"/>
    </location>
</feature>
<feature type="active site" description="Proton acceptor" evidence="1">
    <location>
        <position position="187"/>
    </location>
</feature>
<feature type="binding site" evidence="1">
    <location>
        <begin position="51"/>
        <end position="52"/>
    </location>
    <ligand>
        <name>3-methyl-2-oxobutanoate</name>
        <dbReference type="ChEBI" id="CHEBI:11851"/>
    </ligand>
</feature>
<feature type="binding site" evidence="1">
    <location>
        <position position="51"/>
    </location>
    <ligand>
        <name>Mg(2+)</name>
        <dbReference type="ChEBI" id="CHEBI:18420"/>
    </ligand>
</feature>
<feature type="binding site" evidence="1">
    <location>
        <position position="90"/>
    </location>
    <ligand>
        <name>3-methyl-2-oxobutanoate</name>
        <dbReference type="ChEBI" id="CHEBI:11851"/>
    </ligand>
</feature>
<feature type="binding site" evidence="1">
    <location>
        <position position="90"/>
    </location>
    <ligand>
        <name>Mg(2+)</name>
        <dbReference type="ChEBI" id="CHEBI:18420"/>
    </ligand>
</feature>
<feature type="binding site" evidence="1">
    <location>
        <position position="118"/>
    </location>
    <ligand>
        <name>3-methyl-2-oxobutanoate</name>
        <dbReference type="ChEBI" id="CHEBI:11851"/>
    </ligand>
</feature>
<feature type="binding site" evidence="1">
    <location>
        <position position="120"/>
    </location>
    <ligand>
        <name>Mg(2+)</name>
        <dbReference type="ChEBI" id="CHEBI:18420"/>
    </ligand>
</feature>
<organism>
    <name type="scientific">Xylella fastidiosa (strain M23)</name>
    <dbReference type="NCBI Taxonomy" id="405441"/>
    <lineage>
        <taxon>Bacteria</taxon>
        <taxon>Pseudomonadati</taxon>
        <taxon>Pseudomonadota</taxon>
        <taxon>Gammaproteobacteria</taxon>
        <taxon>Lysobacterales</taxon>
        <taxon>Lysobacteraceae</taxon>
        <taxon>Xylella</taxon>
    </lineage>
</organism>
<keyword id="KW-0963">Cytoplasm</keyword>
<keyword id="KW-0460">Magnesium</keyword>
<keyword id="KW-0479">Metal-binding</keyword>
<keyword id="KW-0566">Pantothenate biosynthesis</keyword>
<keyword id="KW-0808">Transferase</keyword>
<evidence type="ECO:0000255" key="1">
    <source>
        <dbReference type="HAMAP-Rule" id="MF_00156"/>
    </source>
</evidence>
<gene>
    <name evidence="1" type="primary">panB</name>
    <name type="ordered locus">XfasM23_0173</name>
</gene>